<keyword id="KW-0004">4Fe-4S</keyword>
<keyword id="KW-0963">Cytoplasm</keyword>
<keyword id="KW-0408">Iron</keyword>
<keyword id="KW-0411">Iron-sulfur</keyword>
<keyword id="KW-0479">Metal-binding</keyword>
<keyword id="KW-1185">Reference proteome</keyword>
<keyword id="KW-0949">S-adenosyl-L-methionine</keyword>
<keyword id="KW-0808">Transferase</keyword>
<evidence type="ECO:0000255" key="1">
    <source>
        <dbReference type="HAMAP-Rule" id="MF_01865"/>
    </source>
</evidence>
<evidence type="ECO:0000255" key="2">
    <source>
        <dbReference type="PROSITE-ProRule" id="PRU01266"/>
    </source>
</evidence>
<sequence length="472" mass="52801">MTVETFKPKQTTTLDIPVKTLEAASTNAVTTGNRIGFVSLGCPKNLVDSERILTQLRIDGYEVTNSYANADLVIVNTCGFIDAAVEESLDAVREALEENGKVIVTGCLGAKENQIREVHPDVLEITGPHSYEAVLKHVHKYVPKPEHNPFTSLIPQTGVKLTPKHYAYLKISEGCDNRCTFCIIPSLRGDLDSRPAGSILDEAKRLVESGVQEILVVSQDTSAYGKDKGGRTDFWNGMPVKQDITSLARQLGKMGAWVRLHYIYPYPWVDDLIPLMAEGLILPYLDIPMQHASPRILKMMKRPGRVDRQLEAIQRWREICPDLVIRSTFIVGFPGETEEDFQILLDFLKEARLDRVGCFKYSEVDGAVANTIAELISEDVKEDRYHRFMEVQAEISAERLARFVGRTLDILIDDVDEEGAIGRSFADAPEIDGMVFINGETELEPGMLVRARITHSDEHDLWAEVVDADTQD</sequence>
<protein>
    <recommendedName>
        <fullName evidence="1">Ribosomal protein uS12 methylthiotransferase RimO</fullName>
        <shortName evidence="1">uS12 MTTase</shortName>
        <shortName evidence="1">uS12 methylthiotransferase</shortName>
        <ecNumber evidence="1">2.8.4.4</ecNumber>
    </recommendedName>
    <alternativeName>
        <fullName evidence="1">Ribosomal protein uS12 (aspartate-C(3))-methylthiotransferase</fullName>
    </alternativeName>
    <alternativeName>
        <fullName evidence="1">Ribosome maturation factor RimO</fullName>
    </alternativeName>
</protein>
<accession>A3D958</accession>
<name>RIMO_SHEB5</name>
<gene>
    <name evidence="1" type="primary">rimO</name>
    <name type="ordered locus">Sbal_3800</name>
</gene>
<dbReference type="EC" id="2.8.4.4" evidence="1"/>
<dbReference type="EMBL" id="CP000563">
    <property type="protein sequence ID" value="ABN63271.1"/>
    <property type="molecule type" value="Genomic_DNA"/>
</dbReference>
<dbReference type="RefSeq" id="WP_011847913.1">
    <property type="nucleotide sequence ID" value="NC_009052.1"/>
</dbReference>
<dbReference type="SMR" id="A3D958"/>
<dbReference type="STRING" id="325240.Sbal_3800"/>
<dbReference type="KEGG" id="sbl:Sbal_3800"/>
<dbReference type="HOGENOM" id="CLU_018697_0_0_6"/>
<dbReference type="OrthoDB" id="9805215at2"/>
<dbReference type="Proteomes" id="UP000001557">
    <property type="component" value="Chromosome"/>
</dbReference>
<dbReference type="GO" id="GO:0005829">
    <property type="term" value="C:cytosol"/>
    <property type="evidence" value="ECO:0007669"/>
    <property type="project" value="TreeGrafter"/>
</dbReference>
<dbReference type="GO" id="GO:0051539">
    <property type="term" value="F:4 iron, 4 sulfur cluster binding"/>
    <property type="evidence" value="ECO:0007669"/>
    <property type="project" value="UniProtKB-UniRule"/>
</dbReference>
<dbReference type="GO" id="GO:0035599">
    <property type="term" value="F:aspartic acid methylthiotransferase activity"/>
    <property type="evidence" value="ECO:0007669"/>
    <property type="project" value="TreeGrafter"/>
</dbReference>
<dbReference type="GO" id="GO:0046872">
    <property type="term" value="F:metal ion binding"/>
    <property type="evidence" value="ECO:0007669"/>
    <property type="project" value="UniProtKB-KW"/>
</dbReference>
<dbReference type="GO" id="GO:0103039">
    <property type="term" value="F:protein methylthiotransferase activity"/>
    <property type="evidence" value="ECO:0007669"/>
    <property type="project" value="UniProtKB-EC"/>
</dbReference>
<dbReference type="GO" id="GO:0006400">
    <property type="term" value="P:tRNA modification"/>
    <property type="evidence" value="ECO:0007669"/>
    <property type="project" value="InterPro"/>
</dbReference>
<dbReference type="CDD" id="cd01335">
    <property type="entry name" value="Radical_SAM"/>
    <property type="match status" value="1"/>
</dbReference>
<dbReference type="FunFam" id="2.40.50.140:FF:000060">
    <property type="entry name" value="Ribosomal protein S12 methylthiotransferase RimO"/>
    <property type="match status" value="1"/>
</dbReference>
<dbReference type="FunFam" id="3.40.50.12160:FF:000002">
    <property type="entry name" value="Ribosomal protein S12 methylthiotransferase RimO"/>
    <property type="match status" value="1"/>
</dbReference>
<dbReference type="FunFam" id="3.80.30.20:FF:000001">
    <property type="entry name" value="tRNA-2-methylthio-N(6)-dimethylallyladenosine synthase 2"/>
    <property type="match status" value="1"/>
</dbReference>
<dbReference type="Gene3D" id="3.40.50.12160">
    <property type="entry name" value="Methylthiotransferase, N-terminal domain"/>
    <property type="match status" value="1"/>
</dbReference>
<dbReference type="Gene3D" id="2.40.50.140">
    <property type="entry name" value="Nucleic acid-binding proteins"/>
    <property type="match status" value="1"/>
</dbReference>
<dbReference type="Gene3D" id="3.80.30.20">
    <property type="entry name" value="tm_1862 like domain"/>
    <property type="match status" value="1"/>
</dbReference>
<dbReference type="HAMAP" id="MF_01865">
    <property type="entry name" value="MTTase_RimO"/>
    <property type="match status" value="1"/>
</dbReference>
<dbReference type="InterPro" id="IPR006638">
    <property type="entry name" value="Elp3/MiaA/NifB-like_rSAM"/>
</dbReference>
<dbReference type="InterPro" id="IPR005839">
    <property type="entry name" value="Methylthiotransferase"/>
</dbReference>
<dbReference type="InterPro" id="IPR020612">
    <property type="entry name" value="Methylthiotransferase_CS"/>
</dbReference>
<dbReference type="InterPro" id="IPR013848">
    <property type="entry name" value="Methylthiotransferase_N"/>
</dbReference>
<dbReference type="InterPro" id="IPR038135">
    <property type="entry name" value="Methylthiotransferase_N_sf"/>
</dbReference>
<dbReference type="InterPro" id="IPR012340">
    <property type="entry name" value="NA-bd_OB-fold"/>
</dbReference>
<dbReference type="InterPro" id="IPR005840">
    <property type="entry name" value="Ribosomal_uS12_MeSTrfase_RimO"/>
</dbReference>
<dbReference type="InterPro" id="IPR007197">
    <property type="entry name" value="rSAM"/>
</dbReference>
<dbReference type="InterPro" id="IPR023404">
    <property type="entry name" value="rSAM_horseshoe"/>
</dbReference>
<dbReference type="InterPro" id="IPR002792">
    <property type="entry name" value="TRAM_dom"/>
</dbReference>
<dbReference type="NCBIfam" id="TIGR01125">
    <property type="entry name" value="30S ribosomal protein S12 methylthiotransferase RimO"/>
    <property type="match status" value="1"/>
</dbReference>
<dbReference type="NCBIfam" id="TIGR00089">
    <property type="entry name" value="MiaB/RimO family radical SAM methylthiotransferase"/>
    <property type="match status" value="1"/>
</dbReference>
<dbReference type="PANTHER" id="PTHR43837">
    <property type="entry name" value="RIBOSOMAL PROTEIN S12 METHYLTHIOTRANSFERASE RIMO"/>
    <property type="match status" value="1"/>
</dbReference>
<dbReference type="PANTHER" id="PTHR43837:SF1">
    <property type="entry name" value="RIBOSOMAL PROTEIN US12 METHYLTHIOTRANSFERASE RIMO"/>
    <property type="match status" value="1"/>
</dbReference>
<dbReference type="Pfam" id="PF04055">
    <property type="entry name" value="Radical_SAM"/>
    <property type="match status" value="1"/>
</dbReference>
<dbReference type="Pfam" id="PF18693">
    <property type="entry name" value="TRAM_2"/>
    <property type="match status" value="1"/>
</dbReference>
<dbReference type="Pfam" id="PF00919">
    <property type="entry name" value="UPF0004"/>
    <property type="match status" value="1"/>
</dbReference>
<dbReference type="SFLD" id="SFLDG01082">
    <property type="entry name" value="B12-binding_domain_containing"/>
    <property type="match status" value="1"/>
</dbReference>
<dbReference type="SFLD" id="SFLDS00029">
    <property type="entry name" value="Radical_SAM"/>
    <property type="match status" value="1"/>
</dbReference>
<dbReference type="SFLD" id="SFLDF00274">
    <property type="entry name" value="ribosomal_protein_S12_methylth"/>
    <property type="match status" value="1"/>
</dbReference>
<dbReference type="SMART" id="SM00729">
    <property type="entry name" value="Elp3"/>
    <property type="match status" value="1"/>
</dbReference>
<dbReference type="SUPFAM" id="SSF102114">
    <property type="entry name" value="Radical SAM enzymes"/>
    <property type="match status" value="1"/>
</dbReference>
<dbReference type="PROSITE" id="PS51449">
    <property type="entry name" value="MTTASE_N"/>
    <property type="match status" value="1"/>
</dbReference>
<dbReference type="PROSITE" id="PS01278">
    <property type="entry name" value="MTTASE_RADICAL"/>
    <property type="match status" value="1"/>
</dbReference>
<dbReference type="PROSITE" id="PS51918">
    <property type="entry name" value="RADICAL_SAM"/>
    <property type="match status" value="1"/>
</dbReference>
<dbReference type="PROSITE" id="PS50926">
    <property type="entry name" value="TRAM"/>
    <property type="match status" value="1"/>
</dbReference>
<feature type="chain" id="PRO_0000375000" description="Ribosomal protein uS12 methylthiotransferase RimO">
    <location>
        <begin position="1"/>
        <end position="472"/>
    </location>
</feature>
<feature type="domain" description="MTTase N-terminal" evidence="1">
    <location>
        <begin position="33"/>
        <end position="143"/>
    </location>
</feature>
<feature type="domain" description="Radical SAM core" evidence="2">
    <location>
        <begin position="161"/>
        <end position="398"/>
    </location>
</feature>
<feature type="domain" description="TRAM" evidence="1">
    <location>
        <begin position="401"/>
        <end position="467"/>
    </location>
</feature>
<feature type="binding site" evidence="1">
    <location>
        <position position="42"/>
    </location>
    <ligand>
        <name>[4Fe-4S] cluster</name>
        <dbReference type="ChEBI" id="CHEBI:49883"/>
        <label>1</label>
    </ligand>
</feature>
<feature type="binding site" evidence="1">
    <location>
        <position position="78"/>
    </location>
    <ligand>
        <name>[4Fe-4S] cluster</name>
        <dbReference type="ChEBI" id="CHEBI:49883"/>
        <label>1</label>
    </ligand>
</feature>
<feature type="binding site" evidence="1">
    <location>
        <position position="107"/>
    </location>
    <ligand>
        <name>[4Fe-4S] cluster</name>
        <dbReference type="ChEBI" id="CHEBI:49883"/>
        <label>1</label>
    </ligand>
</feature>
<feature type="binding site" evidence="1">
    <location>
        <position position="175"/>
    </location>
    <ligand>
        <name>[4Fe-4S] cluster</name>
        <dbReference type="ChEBI" id="CHEBI:49883"/>
        <label>2</label>
        <note>4Fe-4S-S-AdoMet</note>
    </ligand>
</feature>
<feature type="binding site" evidence="1">
    <location>
        <position position="179"/>
    </location>
    <ligand>
        <name>[4Fe-4S] cluster</name>
        <dbReference type="ChEBI" id="CHEBI:49883"/>
        <label>2</label>
        <note>4Fe-4S-S-AdoMet</note>
    </ligand>
</feature>
<feature type="binding site" evidence="1">
    <location>
        <position position="182"/>
    </location>
    <ligand>
        <name>[4Fe-4S] cluster</name>
        <dbReference type="ChEBI" id="CHEBI:49883"/>
        <label>2</label>
        <note>4Fe-4S-S-AdoMet</note>
    </ligand>
</feature>
<organism>
    <name type="scientific">Shewanella baltica (strain OS155 / ATCC BAA-1091)</name>
    <dbReference type="NCBI Taxonomy" id="325240"/>
    <lineage>
        <taxon>Bacteria</taxon>
        <taxon>Pseudomonadati</taxon>
        <taxon>Pseudomonadota</taxon>
        <taxon>Gammaproteobacteria</taxon>
        <taxon>Alteromonadales</taxon>
        <taxon>Shewanellaceae</taxon>
        <taxon>Shewanella</taxon>
    </lineage>
</organism>
<comment type="function">
    <text evidence="1">Catalyzes the methylthiolation of an aspartic acid residue of ribosomal protein uS12.</text>
</comment>
<comment type="catalytic activity">
    <reaction evidence="1">
        <text>L-aspartate(89)-[ribosomal protein uS12]-hydrogen + (sulfur carrier)-SH + AH2 + 2 S-adenosyl-L-methionine = 3-methylsulfanyl-L-aspartate(89)-[ribosomal protein uS12]-hydrogen + (sulfur carrier)-H + 5'-deoxyadenosine + L-methionine + A + S-adenosyl-L-homocysteine + 2 H(+)</text>
        <dbReference type="Rhea" id="RHEA:37087"/>
        <dbReference type="Rhea" id="RHEA-COMP:10460"/>
        <dbReference type="Rhea" id="RHEA-COMP:10461"/>
        <dbReference type="Rhea" id="RHEA-COMP:14737"/>
        <dbReference type="Rhea" id="RHEA-COMP:14739"/>
        <dbReference type="ChEBI" id="CHEBI:13193"/>
        <dbReference type="ChEBI" id="CHEBI:15378"/>
        <dbReference type="ChEBI" id="CHEBI:17319"/>
        <dbReference type="ChEBI" id="CHEBI:17499"/>
        <dbReference type="ChEBI" id="CHEBI:29917"/>
        <dbReference type="ChEBI" id="CHEBI:29961"/>
        <dbReference type="ChEBI" id="CHEBI:57844"/>
        <dbReference type="ChEBI" id="CHEBI:57856"/>
        <dbReference type="ChEBI" id="CHEBI:59789"/>
        <dbReference type="ChEBI" id="CHEBI:64428"/>
        <dbReference type="ChEBI" id="CHEBI:73599"/>
        <dbReference type="EC" id="2.8.4.4"/>
    </reaction>
</comment>
<comment type="cofactor">
    <cofactor evidence="1">
        <name>[4Fe-4S] cluster</name>
        <dbReference type="ChEBI" id="CHEBI:49883"/>
    </cofactor>
    <text evidence="1">Binds 2 [4Fe-4S] clusters. One cluster is coordinated with 3 cysteines and an exchangeable S-adenosyl-L-methionine.</text>
</comment>
<comment type="subcellular location">
    <subcellularLocation>
        <location evidence="1">Cytoplasm</location>
    </subcellularLocation>
</comment>
<comment type="similarity">
    <text evidence="1">Belongs to the methylthiotransferase family. RimO subfamily.</text>
</comment>
<proteinExistence type="inferred from homology"/>
<reference key="1">
    <citation type="submission" date="2007-02" db="EMBL/GenBank/DDBJ databases">
        <title>Complete sequence of chromosome of Shewanella baltica OS155.</title>
        <authorList>
            <consortium name="US DOE Joint Genome Institute"/>
            <person name="Copeland A."/>
            <person name="Lucas S."/>
            <person name="Lapidus A."/>
            <person name="Barry K."/>
            <person name="Detter J.C."/>
            <person name="Glavina del Rio T."/>
            <person name="Hammon N."/>
            <person name="Israni S."/>
            <person name="Dalin E."/>
            <person name="Tice H."/>
            <person name="Pitluck S."/>
            <person name="Sims D.R."/>
            <person name="Brettin T."/>
            <person name="Bruce D."/>
            <person name="Han C."/>
            <person name="Tapia R."/>
            <person name="Brainard J."/>
            <person name="Schmutz J."/>
            <person name="Larimer F."/>
            <person name="Land M."/>
            <person name="Hauser L."/>
            <person name="Kyrpides N."/>
            <person name="Mikhailova N."/>
            <person name="Brettar I."/>
            <person name="Klappenbach J."/>
            <person name="Konstantinidis K."/>
            <person name="Rodrigues J."/>
            <person name="Tiedje J."/>
            <person name="Richardson P."/>
        </authorList>
    </citation>
    <scope>NUCLEOTIDE SEQUENCE [LARGE SCALE GENOMIC DNA]</scope>
    <source>
        <strain>OS155 / ATCC BAA-1091</strain>
    </source>
</reference>